<gene>
    <name type="ORF">R10E11.5</name>
</gene>
<reference key="1">
    <citation type="journal article" date="1994" name="Nature">
        <title>2.2 Mb of contiguous nucleotide sequence from chromosome III of C. elegans.</title>
        <authorList>
            <person name="Wilson R."/>
            <person name="Ainscough R."/>
            <person name="Anderson K."/>
            <person name="Baynes C."/>
            <person name="Berks M."/>
            <person name="Bonfield J."/>
            <person name="Burton J."/>
            <person name="Connell M."/>
            <person name="Copsey T."/>
            <person name="Cooper J."/>
            <person name="Coulson A."/>
            <person name="Craxton M."/>
            <person name="Dear S."/>
            <person name="Du Z."/>
            <person name="Durbin R."/>
            <person name="Favello A."/>
            <person name="Fraser A."/>
            <person name="Fulton L."/>
            <person name="Gardner A."/>
            <person name="Green P."/>
            <person name="Hawkins T."/>
            <person name="Hillier L."/>
            <person name="Jier M."/>
            <person name="Johnston L."/>
            <person name="Jones M."/>
            <person name="Kershaw J."/>
            <person name="Kirsten J."/>
            <person name="Laisster N."/>
            <person name="Latreille P."/>
            <person name="Lightning J."/>
            <person name="Lloyd C."/>
            <person name="Mortimore B."/>
            <person name="O'Callaghan M."/>
            <person name="Parsons J."/>
            <person name="Percy C."/>
            <person name="Rifken L."/>
            <person name="Roopra A."/>
            <person name="Saunders D."/>
            <person name="Shownkeen R."/>
            <person name="Sims M."/>
            <person name="Smaldon N."/>
            <person name="Smith A."/>
            <person name="Smith M."/>
            <person name="Sonnhammer E."/>
            <person name="Staden R."/>
            <person name="Sulston J."/>
            <person name="Thierry-Mieg J."/>
            <person name="Thomas K."/>
            <person name="Vaudin M."/>
            <person name="Vaughan K."/>
            <person name="Waterston R."/>
            <person name="Watson A."/>
            <person name="Weinstock L."/>
            <person name="Wilkinson-Sproat J."/>
            <person name="Wohldman P."/>
        </authorList>
    </citation>
    <scope>NUCLEOTIDE SEQUENCE [LARGE SCALE GENOMIC DNA]</scope>
    <source>
        <strain>Bristol N2</strain>
    </source>
</reference>
<reference key="2">
    <citation type="journal article" date="1998" name="Science">
        <title>Genome sequence of the nematode C. elegans: a platform for investigating biology.</title>
        <authorList>
            <consortium name="The C. elegans sequencing consortium"/>
        </authorList>
    </citation>
    <scope>NUCLEOTIDE SEQUENCE [LARGE SCALE GENOMIC DNA]</scope>
    <source>
        <strain>Bristol N2</strain>
    </source>
</reference>
<proteinExistence type="predicted"/>
<accession>P34549</accession>
<sequence length="444" mass="48965">MASSAGRDKLRSRGQRVFAFGSSTPRDLSHMSKVPQNLRNYDAKSVDKSPSDAPSLHDYIVKARSLSREACDSRNQFVFGSSTPRTLAHLDKIPHKQRVYDAKIPKKNTTHSDFKAAPIRFNAPPVPITKPAKKEENRHVITSKDDDIASEPDIVQDREEFMNEMKKHKIELEKKKSLGKNDSKTTIEIPTPKAAETQQEHVKFAHAPEIAGNSQKAVRIQSETQEEAPVAVKNLSANKMNDQIEVSQLMNEITPESVPAVESLDNQKNANVVGDLLAKVQKVADDTIDKSKTTVAADVAKMSGALQKAEEEVVQTIDQTVKNIKSNVNEVKKDVEKNIAEKVDDITKELEKSAKSLEETTDKIGSKIDNTSQAIKSNLEEASLKTEKSVNDAVKSGEKLIGDLASEAKKTFDSAEQKLDAKFSKIGSTADSTLEDVKNGLRHF</sequence>
<feature type="chain" id="PRO_0000065431" description="Uncharacterized protein R10E11.5">
    <location>
        <begin position="1"/>
        <end position="444"/>
    </location>
</feature>
<feature type="region of interest" description="Disordered" evidence="1">
    <location>
        <begin position="1"/>
        <end position="35"/>
    </location>
</feature>
<feature type="compositionally biased region" description="Basic and acidic residues" evidence="1">
    <location>
        <begin position="1"/>
        <end position="11"/>
    </location>
</feature>
<name>YNJ5_CAEEL</name>
<keyword id="KW-1185">Reference proteome</keyword>
<protein>
    <recommendedName>
        <fullName>Uncharacterized protein R10E11.5</fullName>
    </recommendedName>
</protein>
<evidence type="ECO:0000256" key="1">
    <source>
        <dbReference type="SAM" id="MobiDB-lite"/>
    </source>
</evidence>
<organism>
    <name type="scientific">Caenorhabditis elegans</name>
    <dbReference type="NCBI Taxonomy" id="6239"/>
    <lineage>
        <taxon>Eukaryota</taxon>
        <taxon>Metazoa</taxon>
        <taxon>Ecdysozoa</taxon>
        <taxon>Nematoda</taxon>
        <taxon>Chromadorea</taxon>
        <taxon>Rhabditida</taxon>
        <taxon>Rhabditina</taxon>
        <taxon>Rhabditomorpha</taxon>
        <taxon>Rhabditoidea</taxon>
        <taxon>Rhabditidae</taxon>
        <taxon>Peloderinae</taxon>
        <taxon>Caenorhabditis</taxon>
    </lineage>
</organism>
<dbReference type="EMBL" id="Z29095">
    <property type="protein sequence ID" value="CAA82348.3"/>
    <property type="molecule type" value="Genomic_DNA"/>
</dbReference>
<dbReference type="PIR" id="S40717">
    <property type="entry name" value="S40717"/>
</dbReference>
<dbReference type="RefSeq" id="NP_001255031.1">
    <property type="nucleotide sequence ID" value="NM_001268102.3"/>
</dbReference>
<dbReference type="SMR" id="P34549"/>
<dbReference type="BioGRID" id="52461">
    <property type="interactions" value="2"/>
</dbReference>
<dbReference type="FunCoup" id="P34549">
    <property type="interactions" value="172"/>
</dbReference>
<dbReference type="STRING" id="6239.R10E11.5a.1"/>
<dbReference type="PaxDb" id="6239-R10E11.5a"/>
<dbReference type="PeptideAtlas" id="P34549"/>
<dbReference type="EnsemblMetazoa" id="R10E11.5a.1">
    <property type="protein sequence ID" value="R10E11.5a.1"/>
    <property type="gene ID" value="WBGene00011217"/>
</dbReference>
<dbReference type="GeneID" id="187778"/>
<dbReference type="KEGG" id="cel:CELE_R10E11.5"/>
<dbReference type="UCSC" id="R10E11.5">
    <property type="organism name" value="c. elegans"/>
</dbReference>
<dbReference type="AGR" id="WB:WBGene00011217"/>
<dbReference type="CTD" id="187778"/>
<dbReference type="WormBase" id="R10E11.5a">
    <property type="protein sequence ID" value="CE39268"/>
    <property type="gene ID" value="WBGene00011217"/>
</dbReference>
<dbReference type="eggNOG" id="ENOG502TBVR">
    <property type="taxonomic scope" value="Eukaryota"/>
</dbReference>
<dbReference type="HOGENOM" id="CLU_050578_0_0_1"/>
<dbReference type="InParanoid" id="P34549"/>
<dbReference type="OMA" id="FAHAPEI"/>
<dbReference type="OrthoDB" id="5869075at2759"/>
<dbReference type="PhylomeDB" id="P34549"/>
<dbReference type="PRO" id="PR:P34549"/>
<dbReference type="Proteomes" id="UP000001940">
    <property type="component" value="Chromosome III"/>
</dbReference>
<dbReference type="Bgee" id="WBGene00011217">
    <property type="expression patterns" value="Expressed in larva and 3 other cell types or tissues"/>
</dbReference>
<dbReference type="ExpressionAtlas" id="P34549">
    <property type="expression patterns" value="baseline and differential"/>
</dbReference>
<dbReference type="Gene3D" id="1.20.120.20">
    <property type="entry name" value="Apolipoprotein"/>
    <property type="match status" value="1"/>
</dbReference>
<dbReference type="SUPFAM" id="SSF58113">
    <property type="entry name" value="Apolipoprotein A-I"/>
    <property type="match status" value="1"/>
</dbReference>